<proteinExistence type="inferred from homology"/>
<sequence length="509" mass="56347">MDYDLVMEDEFDALCLDVRRDHDSASKTKYPAKLHARKVVKELGVDDGLIYLPGQPDISLENSDQPRLFRQRRYFFYITGADFEDCAATYEVKHDKLTLWVPYVEPRQVLWFGSKPSAAECKRRYDVDEVRYTTQLSSFLRRFAAQPEPPVVYILHPDQAPDLGHGSQSQLRLDSSLLLPAMDRARVVKSDYEVAMVRRANDISSAAHRRVAERILRLTNEREIEAIIQAVCIANGSRSQAYPIIAGSGANGATLHYGANNAPLGGKQCVVIDAGCEWNCYASDITRTLPLSGSWTPKAAAIHAIVQRMQQECIAKVGPGTAWRDIHLHAASLGMEGLLGLGILKGRREDVARAGTVAAFFPHGLGHHVGLEVHDVSGTLALSAAEGHGTQLDFGKRAMVTPSMLADMTRSASSPDAAGVQERKTQLLLPNMIVTVEPGIYFCREYLEGYFRSDPAHADFIDWDLLEEYYDVGGVRIEDCILVTEDGYENLTVAPKGDELLDVINKGEK</sequence>
<evidence type="ECO:0000250" key="1"/>
<evidence type="ECO:0000305" key="2"/>
<dbReference type="EC" id="3.4.11.9"/>
<dbReference type="EMBL" id="GL698495">
    <property type="protein sequence ID" value="EFY89883.1"/>
    <property type="molecule type" value="Genomic_DNA"/>
</dbReference>
<dbReference type="RefSeq" id="XP_007810432.1">
    <property type="nucleotide sequence ID" value="XM_007812241.1"/>
</dbReference>
<dbReference type="SMR" id="E9E2J4"/>
<dbReference type="STRING" id="655827.E9E2J4"/>
<dbReference type="GeneID" id="19248403"/>
<dbReference type="KEGG" id="maw:19248403"/>
<dbReference type="eggNOG" id="KOG2737">
    <property type="taxonomic scope" value="Eukaryota"/>
</dbReference>
<dbReference type="HOGENOM" id="CLU_017266_1_2_1"/>
<dbReference type="InParanoid" id="E9E2J4"/>
<dbReference type="OMA" id="YELRMIR"/>
<dbReference type="OrthoDB" id="10261878at2759"/>
<dbReference type="Proteomes" id="UP000002499">
    <property type="component" value="Unassembled WGS sequence"/>
</dbReference>
<dbReference type="GO" id="GO:0030145">
    <property type="term" value="F:manganese ion binding"/>
    <property type="evidence" value="ECO:0007669"/>
    <property type="project" value="InterPro"/>
</dbReference>
<dbReference type="GO" id="GO:0070006">
    <property type="term" value="F:metalloaminopeptidase activity"/>
    <property type="evidence" value="ECO:0007669"/>
    <property type="project" value="InterPro"/>
</dbReference>
<dbReference type="GO" id="GO:0006508">
    <property type="term" value="P:proteolysis"/>
    <property type="evidence" value="ECO:0007669"/>
    <property type="project" value="UniProtKB-KW"/>
</dbReference>
<dbReference type="CDD" id="cd01087">
    <property type="entry name" value="Prolidase"/>
    <property type="match status" value="1"/>
</dbReference>
<dbReference type="Gene3D" id="3.90.230.10">
    <property type="entry name" value="Creatinase/methionine aminopeptidase superfamily"/>
    <property type="match status" value="1"/>
</dbReference>
<dbReference type="Gene3D" id="3.40.350.10">
    <property type="entry name" value="Creatinase/prolidase N-terminal domain"/>
    <property type="match status" value="1"/>
</dbReference>
<dbReference type="InterPro" id="IPR007865">
    <property type="entry name" value="Aminopep_P_N"/>
</dbReference>
<dbReference type="InterPro" id="IPR029149">
    <property type="entry name" value="Creatin/AminoP/Spt16_N"/>
</dbReference>
<dbReference type="InterPro" id="IPR036005">
    <property type="entry name" value="Creatinase/aminopeptidase-like"/>
</dbReference>
<dbReference type="InterPro" id="IPR000994">
    <property type="entry name" value="Pept_M24"/>
</dbReference>
<dbReference type="InterPro" id="IPR001131">
    <property type="entry name" value="Peptidase_M24B_aminopep-P_CS"/>
</dbReference>
<dbReference type="InterPro" id="IPR052433">
    <property type="entry name" value="X-Pro_dipept-like"/>
</dbReference>
<dbReference type="PANTHER" id="PTHR43226">
    <property type="entry name" value="XAA-PRO AMINOPEPTIDASE 3"/>
    <property type="match status" value="1"/>
</dbReference>
<dbReference type="PANTHER" id="PTHR43226:SF3">
    <property type="entry name" value="XAA-PRO AMINOPEPTIDASE AN0832-RELATED"/>
    <property type="match status" value="1"/>
</dbReference>
<dbReference type="Pfam" id="PF05195">
    <property type="entry name" value="AMP_N"/>
    <property type="match status" value="1"/>
</dbReference>
<dbReference type="Pfam" id="PF00557">
    <property type="entry name" value="Peptidase_M24"/>
    <property type="match status" value="1"/>
</dbReference>
<dbReference type="SMART" id="SM01011">
    <property type="entry name" value="AMP_N"/>
    <property type="match status" value="1"/>
</dbReference>
<dbReference type="SUPFAM" id="SSF55920">
    <property type="entry name" value="Creatinase/aminopeptidase"/>
    <property type="match status" value="1"/>
</dbReference>
<dbReference type="SUPFAM" id="SSF53092">
    <property type="entry name" value="Creatinase/prolidase N-terminal domain"/>
    <property type="match status" value="1"/>
</dbReference>
<dbReference type="PROSITE" id="PS00491">
    <property type="entry name" value="PROLINE_PEPTIDASE"/>
    <property type="match status" value="1"/>
</dbReference>
<protein>
    <recommendedName>
        <fullName>Probable Xaa-Pro aminopeptidase MAC_04092</fullName>
        <ecNumber>3.4.11.9</ecNumber>
    </recommendedName>
    <alternativeName>
        <fullName>Aminoacylproline aminopeptidase</fullName>
    </alternativeName>
    <alternativeName>
        <fullName>Prolidase</fullName>
    </alternativeName>
</protein>
<accession>E9E2J4</accession>
<name>AMPP2_METAQ</name>
<organism>
    <name type="scientific">Metarhizium acridum (strain CQMa 102)</name>
    <dbReference type="NCBI Taxonomy" id="655827"/>
    <lineage>
        <taxon>Eukaryota</taxon>
        <taxon>Fungi</taxon>
        <taxon>Dikarya</taxon>
        <taxon>Ascomycota</taxon>
        <taxon>Pezizomycotina</taxon>
        <taxon>Sordariomycetes</taxon>
        <taxon>Hypocreomycetidae</taxon>
        <taxon>Hypocreales</taxon>
        <taxon>Clavicipitaceae</taxon>
        <taxon>Metarhizium</taxon>
    </lineage>
</organism>
<keyword id="KW-0031">Aminopeptidase</keyword>
<keyword id="KW-0378">Hydrolase</keyword>
<keyword id="KW-0464">Manganese</keyword>
<keyword id="KW-0479">Metal-binding</keyword>
<keyword id="KW-0482">Metalloprotease</keyword>
<keyword id="KW-0645">Protease</keyword>
<keyword id="KW-1185">Reference proteome</keyword>
<gene>
    <name type="ORF">MAC_04092</name>
</gene>
<feature type="chain" id="PRO_0000411837" description="Probable Xaa-Pro aminopeptidase MAC_04092">
    <location>
        <begin position="1"/>
        <end position="509"/>
    </location>
</feature>
<feature type="binding site" evidence="1">
    <location>
        <position position="273"/>
    </location>
    <ligand>
        <name>Mn(2+)</name>
        <dbReference type="ChEBI" id="CHEBI:29035"/>
        <label>2</label>
    </ligand>
</feature>
<feature type="binding site" evidence="1">
    <location>
        <position position="284"/>
    </location>
    <ligand>
        <name>Mn(2+)</name>
        <dbReference type="ChEBI" id="CHEBI:29035"/>
        <label>1</label>
    </ligand>
</feature>
<feature type="binding site" evidence="1">
    <location>
        <position position="284"/>
    </location>
    <ligand>
        <name>Mn(2+)</name>
        <dbReference type="ChEBI" id="CHEBI:29035"/>
        <label>2</label>
    </ligand>
</feature>
<feature type="binding site" evidence="1">
    <location>
        <position position="437"/>
    </location>
    <ligand>
        <name>Mn(2+)</name>
        <dbReference type="ChEBI" id="CHEBI:29035"/>
        <label>1</label>
    </ligand>
</feature>
<feature type="binding site" evidence="1">
    <location>
        <position position="478"/>
    </location>
    <ligand>
        <name>Mn(2+)</name>
        <dbReference type="ChEBI" id="CHEBI:29035"/>
        <label>1</label>
    </ligand>
</feature>
<feature type="binding site" evidence="1">
    <location>
        <position position="478"/>
    </location>
    <ligand>
        <name>Mn(2+)</name>
        <dbReference type="ChEBI" id="CHEBI:29035"/>
        <label>2</label>
    </ligand>
</feature>
<comment type="function">
    <text evidence="1">Catalyzes the removal of a penultimate prolyl residue from the N-termini of peptides.</text>
</comment>
<comment type="catalytic activity">
    <reaction>
        <text>Release of any N-terminal amino acid, including proline, that is linked to proline, even from a dipeptide or tripeptide.</text>
        <dbReference type="EC" id="3.4.11.9"/>
    </reaction>
</comment>
<comment type="cofactor">
    <cofactor evidence="1">
        <name>Mn(2+)</name>
        <dbReference type="ChEBI" id="CHEBI:29035"/>
    </cofactor>
    <text evidence="1">Binds 2 manganese ions per subunit.</text>
</comment>
<comment type="similarity">
    <text evidence="2">Belongs to the peptidase M24B family.</text>
</comment>
<reference key="1">
    <citation type="journal article" date="2011" name="PLoS Genet.">
        <title>Genome sequencing and comparative transcriptomics of the model entomopathogenic fungi Metarhizium anisopliae and M. acridum.</title>
        <authorList>
            <person name="Gao Q."/>
            <person name="Jin K."/>
            <person name="Ying S.-H."/>
            <person name="Zhang Y."/>
            <person name="Xiao G."/>
            <person name="Shang Y."/>
            <person name="Duan Z."/>
            <person name="Hu X."/>
            <person name="Xie X.-Q."/>
            <person name="Zhou G."/>
            <person name="Peng G."/>
            <person name="Luo Z."/>
            <person name="Huang W."/>
            <person name="Wang B."/>
            <person name="Fang W."/>
            <person name="Wang S."/>
            <person name="Zhong Y."/>
            <person name="Ma L.-J."/>
            <person name="St Leger R.J."/>
            <person name="Zhao G.-P."/>
            <person name="Pei Y."/>
            <person name="Feng M.-G."/>
            <person name="Xia Y."/>
            <person name="Wang C."/>
        </authorList>
    </citation>
    <scope>NUCLEOTIDE SEQUENCE [LARGE SCALE GENOMIC DNA]</scope>
    <source>
        <strain>CQMa 102</strain>
    </source>
</reference>